<keyword id="KW-0025">Alternative splicing</keyword>
<keyword id="KW-0256">Endoplasmic reticulum</keyword>
<keyword id="KW-0349">Heme</keyword>
<keyword id="KW-0408">Iron</keyword>
<keyword id="KW-0443">Lipid metabolism</keyword>
<keyword id="KW-0472">Membrane</keyword>
<keyword id="KW-0479">Metal-binding</keyword>
<keyword id="KW-0492">Microsome</keyword>
<keyword id="KW-0496">Mitochondrion</keyword>
<keyword id="KW-0999">Mitochondrion inner membrane</keyword>
<keyword id="KW-0503">Monooxygenase</keyword>
<keyword id="KW-0560">Oxidoreductase</keyword>
<keyword id="KW-1185">Reference proteome</keyword>
<keyword id="KW-0812">Transmembrane</keyword>
<keyword id="KW-1133">Transmembrane helix</keyword>
<reference key="1">
    <citation type="journal article" date="2005" name="Science">
        <title>The transcriptional landscape of the mammalian genome.</title>
        <authorList>
            <person name="Carninci P."/>
            <person name="Kasukawa T."/>
            <person name="Katayama S."/>
            <person name="Gough J."/>
            <person name="Frith M.C."/>
            <person name="Maeda N."/>
            <person name="Oyama R."/>
            <person name="Ravasi T."/>
            <person name="Lenhard B."/>
            <person name="Wells C."/>
            <person name="Kodzius R."/>
            <person name="Shimokawa K."/>
            <person name="Bajic V.B."/>
            <person name="Brenner S.E."/>
            <person name="Batalov S."/>
            <person name="Forrest A.R."/>
            <person name="Zavolan M."/>
            <person name="Davis M.J."/>
            <person name="Wilming L.G."/>
            <person name="Aidinis V."/>
            <person name="Allen J.E."/>
            <person name="Ambesi-Impiombato A."/>
            <person name="Apweiler R."/>
            <person name="Aturaliya R.N."/>
            <person name="Bailey T.L."/>
            <person name="Bansal M."/>
            <person name="Baxter L."/>
            <person name="Beisel K.W."/>
            <person name="Bersano T."/>
            <person name="Bono H."/>
            <person name="Chalk A.M."/>
            <person name="Chiu K.P."/>
            <person name="Choudhary V."/>
            <person name="Christoffels A."/>
            <person name="Clutterbuck D.R."/>
            <person name="Crowe M.L."/>
            <person name="Dalla E."/>
            <person name="Dalrymple B.P."/>
            <person name="de Bono B."/>
            <person name="Della Gatta G."/>
            <person name="di Bernardo D."/>
            <person name="Down T."/>
            <person name="Engstrom P."/>
            <person name="Fagiolini M."/>
            <person name="Faulkner G."/>
            <person name="Fletcher C.F."/>
            <person name="Fukushima T."/>
            <person name="Furuno M."/>
            <person name="Futaki S."/>
            <person name="Gariboldi M."/>
            <person name="Georgii-Hemming P."/>
            <person name="Gingeras T.R."/>
            <person name="Gojobori T."/>
            <person name="Green R.E."/>
            <person name="Gustincich S."/>
            <person name="Harbers M."/>
            <person name="Hayashi Y."/>
            <person name="Hensch T.K."/>
            <person name="Hirokawa N."/>
            <person name="Hill D."/>
            <person name="Huminiecki L."/>
            <person name="Iacono M."/>
            <person name="Ikeo K."/>
            <person name="Iwama A."/>
            <person name="Ishikawa T."/>
            <person name="Jakt M."/>
            <person name="Kanapin A."/>
            <person name="Katoh M."/>
            <person name="Kawasawa Y."/>
            <person name="Kelso J."/>
            <person name="Kitamura H."/>
            <person name="Kitano H."/>
            <person name="Kollias G."/>
            <person name="Krishnan S.P."/>
            <person name="Kruger A."/>
            <person name="Kummerfeld S.K."/>
            <person name="Kurochkin I.V."/>
            <person name="Lareau L.F."/>
            <person name="Lazarevic D."/>
            <person name="Lipovich L."/>
            <person name="Liu J."/>
            <person name="Liuni S."/>
            <person name="McWilliam S."/>
            <person name="Madan Babu M."/>
            <person name="Madera M."/>
            <person name="Marchionni L."/>
            <person name="Matsuda H."/>
            <person name="Matsuzawa S."/>
            <person name="Miki H."/>
            <person name="Mignone F."/>
            <person name="Miyake S."/>
            <person name="Morris K."/>
            <person name="Mottagui-Tabar S."/>
            <person name="Mulder N."/>
            <person name="Nakano N."/>
            <person name="Nakauchi H."/>
            <person name="Ng P."/>
            <person name="Nilsson R."/>
            <person name="Nishiguchi S."/>
            <person name="Nishikawa S."/>
            <person name="Nori F."/>
            <person name="Ohara O."/>
            <person name="Okazaki Y."/>
            <person name="Orlando V."/>
            <person name="Pang K.C."/>
            <person name="Pavan W.J."/>
            <person name="Pavesi G."/>
            <person name="Pesole G."/>
            <person name="Petrovsky N."/>
            <person name="Piazza S."/>
            <person name="Reed J."/>
            <person name="Reid J.F."/>
            <person name="Ring B.Z."/>
            <person name="Ringwald M."/>
            <person name="Rost B."/>
            <person name="Ruan Y."/>
            <person name="Salzberg S.L."/>
            <person name="Sandelin A."/>
            <person name="Schneider C."/>
            <person name="Schoenbach C."/>
            <person name="Sekiguchi K."/>
            <person name="Semple C.A."/>
            <person name="Seno S."/>
            <person name="Sessa L."/>
            <person name="Sheng Y."/>
            <person name="Shibata Y."/>
            <person name="Shimada H."/>
            <person name="Shimada K."/>
            <person name="Silva D."/>
            <person name="Sinclair B."/>
            <person name="Sperling S."/>
            <person name="Stupka E."/>
            <person name="Sugiura K."/>
            <person name="Sultana R."/>
            <person name="Takenaka Y."/>
            <person name="Taki K."/>
            <person name="Tammoja K."/>
            <person name="Tan S.L."/>
            <person name="Tang S."/>
            <person name="Taylor M.S."/>
            <person name="Tegner J."/>
            <person name="Teichmann S.A."/>
            <person name="Ueda H.R."/>
            <person name="van Nimwegen E."/>
            <person name="Verardo R."/>
            <person name="Wei C.L."/>
            <person name="Yagi K."/>
            <person name="Yamanishi H."/>
            <person name="Zabarovsky E."/>
            <person name="Zhu S."/>
            <person name="Zimmer A."/>
            <person name="Hide W."/>
            <person name="Bult C."/>
            <person name="Grimmond S.M."/>
            <person name="Teasdale R.D."/>
            <person name="Liu E.T."/>
            <person name="Brusic V."/>
            <person name="Quackenbush J."/>
            <person name="Wahlestedt C."/>
            <person name="Mattick J.S."/>
            <person name="Hume D.A."/>
            <person name="Kai C."/>
            <person name="Sasaki D."/>
            <person name="Tomaru Y."/>
            <person name="Fukuda S."/>
            <person name="Kanamori-Katayama M."/>
            <person name="Suzuki M."/>
            <person name="Aoki J."/>
            <person name="Arakawa T."/>
            <person name="Iida J."/>
            <person name="Imamura K."/>
            <person name="Itoh M."/>
            <person name="Kato T."/>
            <person name="Kawaji H."/>
            <person name="Kawagashira N."/>
            <person name="Kawashima T."/>
            <person name="Kojima M."/>
            <person name="Kondo S."/>
            <person name="Konno H."/>
            <person name="Nakano K."/>
            <person name="Ninomiya N."/>
            <person name="Nishio T."/>
            <person name="Okada M."/>
            <person name="Plessy C."/>
            <person name="Shibata K."/>
            <person name="Shiraki T."/>
            <person name="Suzuki S."/>
            <person name="Tagami M."/>
            <person name="Waki K."/>
            <person name="Watahiki A."/>
            <person name="Okamura-Oho Y."/>
            <person name="Suzuki H."/>
            <person name="Kawai J."/>
            <person name="Hayashizaki Y."/>
        </authorList>
    </citation>
    <scope>NUCLEOTIDE SEQUENCE [LARGE SCALE MRNA] (ISOFORMS 1; 2 AND 3)</scope>
    <source>
        <strain>C57BL/6J</strain>
        <tissue>Heart</tissue>
        <tissue>Lung</tissue>
        <tissue>Thymus</tissue>
    </source>
</reference>
<reference key="2">
    <citation type="journal article" date="2005" name="Arch. Biochem. Biophys.">
        <title>Expression patterns of mouse and human CYP orthologs (families 1-4) during development and in different adult tissues.</title>
        <authorList>
            <person name="Choudhary D."/>
            <person name="Jansson I."/>
            <person name="Stoilov I."/>
            <person name="Sarfarazi M."/>
            <person name="Schenkman J.B."/>
        </authorList>
    </citation>
    <scope>TISSUE SPECIFICITY</scope>
    <scope>DEVELOPMENTAL STAGE</scope>
</reference>
<reference key="3">
    <citation type="journal article" date="2012" name="Am. J. Hum. Genet.">
        <title>Alteration of fatty-acid-metabolizing enzymes affects mitochondrial form and function in hereditary spastic paraplegia.</title>
        <authorList>
            <person name="Tesson C."/>
            <person name="Nawara M."/>
            <person name="Salih M.A."/>
            <person name="Rossignol R."/>
            <person name="Zaki M.S."/>
            <person name="Al Balwi M."/>
            <person name="Schule R."/>
            <person name="Mignot C."/>
            <person name="Obre E."/>
            <person name="Bouhouche A."/>
            <person name="Santorelli F.M."/>
            <person name="Durand C.M."/>
            <person name="Oteyza A.C."/>
            <person name="El-Hachimi K.H."/>
            <person name="Al Drees A."/>
            <person name="Bouslam N."/>
            <person name="Lamari F."/>
            <person name="Elmalik S.A."/>
            <person name="Kabiraj M.M."/>
            <person name="Seidahmed M.Z."/>
            <person name="Esteves T."/>
            <person name="Gaussen M."/>
            <person name="Monin M.L."/>
            <person name="Gyapay G."/>
            <person name="Lechner D."/>
            <person name="Gonzalez M."/>
            <person name="Depienne C."/>
            <person name="Mochel F."/>
            <person name="Lavie J."/>
            <person name="Schols L."/>
            <person name="Lacombe D."/>
            <person name="Yahyaoui M."/>
            <person name="Al Abdulkareem I."/>
            <person name="Zuchner S."/>
            <person name="Yamashita A."/>
            <person name="Benomar A."/>
            <person name="Goizet C."/>
            <person name="Durr A."/>
            <person name="Gleeson J.G."/>
            <person name="Darios F."/>
            <person name="Brice A."/>
            <person name="Stevanin G."/>
        </authorList>
    </citation>
    <scope>TISSUE SPECIFICITY</scope>
    <scope>DEVELOPMENTAL STAGE</scope>
</reference>
<feature type="chain" id="PRO_0000291757" description="Cytochrome P450 2U1">
    <location>
        <begin position="1"/>
        <end position="530"/>
    </location>
</feature>
<feature type="transmembrane region" description="Helical" evidence="3">
    <location>
        <begin position="21"/>
        <end position="41"/>
    </location>
</feature>
<feature type="transmembrane region" description="Helical" evidence="3">
    <location>
        <begin position="99"/>
        <end position="119"/>
    </location>
</feature>
<feature type="transmembrane region" description="Helical" evidence="3">
    <location>
        <begin position="247"/>
        <end position="267"/>
    </location>
</feature>
<feature type="transmembrane region" description="Helical" evidence="3">
    <location>
        <begin position="328"/>
        <end position="348"/>
    </location>
</feature>
<feature type="transmembrane region" description="Helical" evidence="3">
    <location>
        <begin position="481"/>
        <end position="501"/>
    </location>
</feature>
<feature type="binding site" description="axial binding residue" evidence="1">
    <location>
        <position position="476"/>
    </location>
    <ligand>
        <name>heme</name>
        <dbReference type="ChEBI" id="CHEBI:30413"/>
    </ligand>
    <ligandPart>
        <name>Fe</name>
        <dbReference type="ChEBI" id="CHEBI:18248"/>
    </ligandPart>
</feature>
<feature type="splice variant" id="VSP_026224" description="In isoform 3." evidence="6">
    <location>
        <begin position="236"/>
        <end position="270"/>
    </location>
</feature>
<feature type="splice variant" id="VSP_026225" description="In isoform 3." evidence="6">
    <original>V</original>
    <variation>A</variation>
    <location>
        <position position="416"/>
    </location>
</feature>
<feature type="splice variant" id="VSP_026226" description="In isoform 3." evidence="6">
    <location>
        <begin position="417"/>
        <end position="530"/>
    </location>
</feature>
<feature type="splice variant" id="VSP_026227" description="In isoform 2." evidence="6">
    <original>KRVCMGEQLAKMELFLMFVSLMQTFTFAL</original>
    <variation>QLKLGFNLFFTLSLVCVCVCVCVCVYRHV</variation>
    <location>
        <begin position="473"/>
        <end position="501"/>
    </location>
</feature>
<feature type="splice variant" id="VSP_026228" description="In isoform 2." evidence="6">
    <location>
        <begin position="502"/>
        <end position="530"/>
    </location>
</feature>
<organism>
    <name type="scientific">Mus musculus</name>
    <name type="common">Mouse</name>
    <dbReference type="NCBI Taxonomy" id="10090"/>
    <lineage>
        <taxon>Eukaryota</taxon>
        <taxon>Metazoa</taxon>
        <taxon>Chordata</taxon>
        <taxon>Craniata</taxon>
        <taxon>Vertebrata</taxon>
        <taxon>Euteleostomi</taxon>
        <taxon>Mammalia</taxon>
        <taxon>Eutheria</taxon>
        <taxon>Euarchontoglires</taxon>
        <taxon>Glires</taxon>
        <taxon>Rodentia</taxon>
        <taxon>Myomorpha</taxon>
        <taxon>Muroidea</taxon>
        <taxon>Muridae</taxon>
        <taxon>Murinae</taxon>
        <taxon>Mus</taxon>
        <taxon>Mus</taxon>
    </lineage>
</organism>
<accession>Q9CX98</accession>
<accession>Q8BIM3</accession>
<evidence type="ECO:0000250" key="1"/>
<evidence type="ECO:0000250" key="2">
    <source>
        <dbReference type="UniProtKB" id="Q7Z449"/>
    </source>
</evidence>
<evidence type="ECO:0000255" key="3"/>
<evidence type="ECO:0000269" key="4">
    <source>
    </source>
</evidence>
<evidence type="ECO:0000269" key="5">
    <source>
    </source>
</evidence>
<evidence type="ECO:0000303" key="6">
    <source>
    </source>
</evidence>
<evidence type="ECO:0000305" key="7"/>
<evidence type="ECO:0000312" key="8">
    <source>
        <dbReference type="MGI" id="MGI:1918769"/>
    </source>
</evidence>
<name>CP2U1_MOUSE</name>
<dbReference type="EC" id="1.14.14.80" evidence="2"/>
<dbReference type="EMBL" id="AK018458">
    <property type="protein sequence ID" value="BAB31223.1"/>
    <property type="molecule type" value="mRNA"/>
</dbReference>
<dbReference type="EMBL" id="AK041477">
    <property type="protein sequence ID" value="BAC30954.1"/>
    <property type="molecule type" value="mRNA"/>
</dbReference>
<dbReference type="EMBL" id="AK142740">
    <property type="status" value="NOT_ANNOTATED_CDS"/>
    <property type="molecule type" value="mRNA"/>
</dbReference>
<dbReference type="CCDS" id="CCDS51069.1">
    <molecule id="Q9CX98-1"/>
</dbReference>
<dbReference type="RefSeq" id="NP_082092.2">
    <molecule id="Q9CX98-1"/>
    <property type="nucleotide sequence ID" value="NM_027816.3"/>
</dbReference>
<dbReference type="SMR" id="Q9CX98"/>
<dbReference type="BioGRID" id="214754">
    <property type="interactions" value="43"/>
</dbReference>
<dbReference type="FunCoup" id="Q9CX98">
    <property type="interactions" value="1944"/>
</dbReference>
<dbReference type="STRING" id="10090.ENSMUSP00000101944"/>
<dbReference type="iPTMnet" id="Q9CX98"/>
<dbReference type="PhosphoSitePlus" id="Q9CX98"/>
<dbReference type="SwissPalm" id="Q9CX98"/>
<dbReference type="PaxDb" id="10090-ENSMUSP00000101944"/>
<dbReference type="ProteomicsDB" id="278008">
    <molecule id="Q9CX98-1"/>
</dbReference>
<dbReference type="ProteomicsDB" id="278009">
    <molecule id="Q9CX98-2"/>
</dbReference>
<dbReference type="ProteomicsDB" id="278010">
    <molecule id="Q9CX98-3"/>
</dbReference>
<dbReference type="Antibodypedia" id="26251">
    <property type="antibodies" value="135 antibodies from 25 providers"/>
</dbReference>
<dbReference type="DNASU" id="71519"/>
<dbReference type="Ensembl" id="ENSMUST00000106337.7">
    <molecule id="Q9CX98-1"/>
    <property type="protein sequence ID" value="ENSMUSP00000101944.3"/>
    <property type="gene ID" value="ENSMUSG00000027983.14"/>
</dbReference>
<dbReference type="Ensembl" id="ENSMUST00000200236.2">
    <molecule id="Q9CX98-2"/>
    <property type="protein sequence ID" value="ENSMUSP00000142519.2"/>
    <property type="gene ID" value="ENSMUSG00000027983.14"/>
</dbReference>
<dbReference type="GeneID" id="71519"/>
<dbReference type="KEGG" id="mmu:71519"/>
<dbReference type="UCSC" id="uc008rjn.1">
    <molecule id="Q9CX98-1"/>
    <property type="organism name" value="mouse"/>
</dbReference>
<dbReference type="UCSC" id="uc008rjo.1">
    <molecule id="Q9CX98-2"/>
    <property type="organism name" value="mouse"/>
</dbReference>
<dbReference type="UCSC" id="uc008rjp.1">
    <molecule id="Q9CX98-3"/>
    <property type="organism name" value="mouse"/>
</dbReference>
<dbReference type="AGR" id="MGI:1918769"/>
<dbReference type="CTD" id="113612"/>
<dbReference type="MGI" id="MGI:1918769">
    <property type="gene designation" value="Cyp2u1"/>
</dbReference>
<dbReference type="VEuPathDB" id="HostDB:ENSMUSG00000027983"/>
<dbReference type="eggNOG" id="KOG0156">
    <property type="taxonomic scope" value="Eukaryota"/>
</dbReference>
<dbReference type="GeneTree" id="ENSGT00940000157714"/>
<dbReference type="HOGENOM" id="CLU_001570_22_3_1"/>
<dbReference type="InParanoid" id="Q9CX98"/>
<dbReference type="OMA" id="EPCIQQG"/>
<dbReference type="OrthoDB" id="1844152at2759"/>
<dbReference type="PhylomeDB" id="Q9CX98"/>
<dbReference type="TreeFam" id="TF352043"/>
<dbReference type="Reactome" id="R-MMU-211958">
    <property type="pathway name" value="Miscellaneous substrates"/>
</dbReference>
<dbReference type="Reactome" id="R-MMU-2142816">
    <property type="pathway name" value="Synthesis of (16-20)-hydroxyeicosatetraenoic acids (HETE)"/>
</dbReference>
<dbReference type="BioGRID-ORCS" id="71519">
    <property type="hits" value="4 hits in 79 CRISPR screens"/>
</dbReference>
<dbReference type="PRO" id="PR:Q9CX98"/>
<dbReference type="Proteomes" id="UP000000589">
    <property type="component" value="Chromosome 3"/>
</dbReference>
<dbReference type="RNAct" id="Q9CX98">
    <property type="molecule type" value="protein"/>
</dbReference>
<dbReference type="Bgee" id="ENSMUSG00000027983">
    <property type="expression patterns" value="Expressed in hepatobiliary system and 55 other cell types or tissues"/>
</dbReference>
<dbReference type="GO" id="GO:0005789">
    <property type="term" value="C:endoplasmic reticulum membrane"/>
    <property type="evidence" value="ECO:0007669"/>
    <property type="project" value="UniProtKB-SubCell"/>
</dbReference>
<dbReference type="GO" id="GO:0005743">
    <property type="term" value="C:mitochondrial inner membrane"/>
    <property type="evidence" value="ECO:0007669"/>
    <property type="project" value="UniProtKB-SubCell"/>
</dbReference>
<dbReference type="GO" id="GO:0052869">
    <property type="term" value="F:arachidonate omega-hydroxylase activity"/>
    <property type="evidence" value="ECO:0007669"/>
    <property type="project" value="Ensembl"/>
</dbReference>
<dbReference type="GO" id="GO:0020037">
    <property type="term" value="F:heme binding"/>
    <property type="evidence" value="ECO:0007669"/>
    <property type="project" value="InterPro"/>
</dbReference>
<dbReference type="GO" id="GO:0005506">
    <property type="term" value="F:iron ion binding"/>
    <property type="evidence" value="ECO:0007669"/>
    <property type="project" value="InterPro"/>
</dbReference>
<dbReference type="GO" id="GO:0102033">
    <property type="term" value="F:long-chain fatty acid omega-hydroxylase activity"/>
    <property type="evidence" value="ECO:0007669"/>
    <property type="project" value="UniProtKB-EC"/>
</dbReference>
<dbReference type="GO" id="GO:0097267">
    <property type="term" value="P:omega-hydroxylase P450 pathway"/>
    <property type="evidence" value="ECO:0007669"/>
    <property type="project" value="Ensembl"/>
</dbReference>
<dbReference type="CDD" id="cd20666">
    <property type="entry name" value="CYP2U1"/>
    <property type="match status" value="1"/>
</dbReference>
<dbReference type="FunFam" id="1.10.630.10:FF:000017">
    <property type="entry name" value="cytochrome P450 2U1 isoform X1"/>
    <property type="match status" value="1"/>
</dbReference>
<dbReference type="Gene3D" id="1.10.630.10">
    <property type="entry name" value="Cytochrome P450"/>
    <property type="match status" value="1"/>
</dbReference>
<dbReference type="InterPro" id="IPR001128">
    <property type="entry name" value="Cyt_P450"/>
</dbReference>
<dbReference type="InterPro" id="IPR017972">
    <property type="entry name" value="Cyt_P450_CS"/>
</dbReference>
<dbReference type="InterPro" id="IPR002401">
    <property type="entry name" value="Cyt_P450_E_grp-I"/>
</dbReference>
<dbReference type="InterPro" id="IPR008069">
    <property type="entry name" value="Cyt_P450_E_grp-I_CYP2D-like"/>
</dbReference>
<dbReference type="InterPro" id="IPR036396">
    <property type="entry name" value="Cyt_P450_sf"/>
</dbReference>
<dbReference type="InterPro" id="IPR050182">
    <property type="entry name" value="Cytochrome_P450_fam2"/>
</dbReference>
<dbReference type="PANTHER" id="PTHR24300:SF364">
    <property type="entry name" value="CYTOCHROME P450 2U1"/>
    <property type="match status" value="1"/>
</dbReference>
<dbReference type="PANTHER" id="PTHR24300">
    <property type="entry name" value="CYTOCHROME P450 508A4-RELATED"/>
    <property type="match status" value="1"/>
</dbReference>
<dbReference type="Pfam" id="PF00067">
    <property type="entry name" value="p450"/>
    <property type="match status" value="1"/>
</dbReference>
<dbReference type="PRINTS" id="PR00463">
    <property type="entry name" value="EP450I"/>
</dbReference>
<dbReference type="PRINTS" id="PR01686">
    <property type="entry name" value="EP450ICYP2D"/>
</dbReference>
<dbReference type="PRINTS" id="PR00385">
    <property type="entry name" value="P450"/>
</dbReference>
<dbReference type="SUPFAM" id="SSF48264">
    <property type="entry name" value="Cytochrome P450"/>
    <property type="match status" value="1"/>
</dbReference>
<dbReference type="PROSITE" id="PS00086">
    <property type="entry name" value="CYTOCHROME_P450"/>
    <property type="match status" value="1"/>
</dbReference>
<proteinExistence type="evidence at transcript level"/>
<protein>
    <recommendedName>
        <fullName>Cytochrome P450 2U1</fullName>
    </recommendedName>
    <alternativeName>
        <fullName>Long-chain fatty acid omega-monooxygenase</fullName>
        <ecNumber evidence="2">1.14.14.80</ecNumber>
    </alternativeName>
</protein>
<gene>
    <name evidence="8" type="primary">Cyp2u1</name>
</gene>
<comment type="function">
    <text evidence="2">A cytochrome P450 monooxygenase involved in the metabolism of arachidonic acid and its conjugates. Mechanistically, uses molecular oxygen inserting one oxygen atom into a substrate, and reducing the second into a water molecule, with two electrons provided by NADPH via cytochrome P450 reductase (CPR; NADPH-ferrihemoprotein reductase). Acts as an omega and omega-1 hydroxylase for arachidonic acid and possibly for other long chain fatty acids. May modulate the arachidonic acid signaling pathway and play a role in other fatty acid signaling processes. May down-regulate the biological activities of N-arachidonoyl-serotonin, an endocannabinoid that has anti-nociceptive effects through inhibition of fatty acid amide hydrolase FAAH, TRPV1 receptor and T-type calcium channels. Catalyzes C-2 oxidation of the indole ring of N-arachidonoyl-serotonin forming a less active product 2-oxo-N-arachidonoyl-serotonin.</text>
</comment>
<comment type="catalytic activity">
    <reaction evidence="2">
        <text>an omega-methyl-long-chain fatty acid + reduced [NADPH--hemoprotein reductase] + O2 = an omega-hydroxy-long-chain fatty acid + oxidized [NADPH--hemoprotein reductase] + H2O + H(+)</text>
        <dbReference type="Rhea" id="RHEA:56748"/>
        <dbReference type="Rhea" id="RHEA-COMP:11964"/>
        <dbReference type="Rhea" id="RHEA-COMP:11965"/>
        <dbReference type="ChEBI" id="CHEBI:15377"/>
        <dbReference type="ChEBI" id="CHEBI:15378"/>
        <dbReference type="ChEBI" id="CHEBI:15379"/>
        <dbReference type="ChEBI" id="CHEBI:57618"/>
        <dbReference type="ChEBI" id="CHEBI:58210"/>
        <dbReference type="ChEBI" id="CHEBI:140991"/>
        <dbReference type="ChEBI" id="CHEBI:140992"/>
        <dbReference type="EC" id="1.14.14.80"/>
    </reaction>
    <physiologicalReaction direction="left-to-right" evidence="2">
        <dbReference type="Rhea" id="RHEA:56749"/>
    </physiologicalReaction>
</comment>
<comment type="catalytic activity">
    <reaction evidence="2">
        <text>(5Z,8Z,11Z,14Z)-eicosatetraenoate + reduced [NADPH--hemoprotein reductase] + O2 = 19-hydroxy-(5Z,8Z,11Z,14Z)-eicosatetraenoate + oxidized [NADPH--hemoprotein reductase] + H2O + H(+)</text>
        <dbReference type="Rhea" id="RHEA:39759"/>
        <dbReference type="Rhea" id="RHEA-COMP:11964"/>
        <dbReference type="Rhea" id="RHEA-COMP:11965"/>
        <dbReference type="ChEBI" id="CHEBI:15377"/>
        <dbReference type="ChEBI" id="CHEBI:15378"/>
        <dbReference type="ChEBI" id="CHEBI:15379"/>
        <dbReference type="ChEBI" id="CHEBI:32395"/>
        <dbReference type="ChEBI" id="CHEBI:57618"/>
        <dbReference type="ChEBI" id="CHEBI:58210"/>
        <dbReference type="ChEBI" id="CHEBI:76627"/>
    </reaction>
    <physiologicalReaction direction="left-to-right" evidence="2">
        <dbReference type="Rhea" id="RHEA:39760"/>
    </physiologicalReaction>
</comment>
<comment type="catalytic activity">
    <reaction evidence="2">
        <text>(5Z,8Z,11Z,14Z)-eicosatetraenoate + reduced [NADPH--hemoprotein reductase] + O2 = 20-hydroxy-(5Z,8Z,11Z,14Z)-eicosatetraenoate + oxidized [NADPH--hemoprotein reductase] + H2O + H(+)</text>
        <dbReference type="Rhea" id="RHEA:39755"/>
        <dbReference type="Rhea" id="RHEA-COMP:11964"/>
        <dbReference type="Rhea" id="RHEA-COMP:11965"/>
        <dbReference type="ChEBI" id="CHEBI:15377"/>
        <dbReference type="ChEBI" id="CHEBI:15378"/>
        <dbReference type="ChEBI" id="CHEBI:15379"/>
        <dbReference type="ChEBI" id="CHEBI:32395"/>
        <dbReference type="ChEBI" id="CHEBI:57618"/>
        <dbReference type="ChEBI" id="CHEBI:58210"/>
        <dbReference type="ChEBI" id="CHEBI:76624"/>
    </reaction>
    <physiologicalReaction direction="left-to-right" evidence="2">
        <dbReference type="Rhea" id="RHEA:39756"/>
    </physiologicalReaction>
</comment>
<comment type="catalytic activity">
    <reaction evidence="2">
        <text>N-[(5Z,8Z,11Z,14Z)-eicosatetraenoyl]-serotonin + reduced [NADPH--hemoprotein reductase] + O2 = 2-oxo-N-[(5Z,8Z,11Z,14Z)-eicosatetraenoyl]-serotonin + oxidized [NADPH--hemoprotein reductase] + H2O + H(+)</text>
        <dbReference type="Rhea" id="RHEA:50296"/>
        <dbReference type="Rhea" id="RHEA-COMP:11964"/>
        <dbReference type="Rhea" id="RHEA-COMP:11965"/>
        <dbReference type="ChEBI" id="CHEBI:15377"/>
        <dbReference type="ChEBI" id="CHEBI:15378"/>
        <dbReference type="ChEBI" id="CHEBI:15379"/>
        <dbReference type="ChEBI" id="CHEBI:57618"/>
        <dbReference type="ChEBI" id="CHEBI:58210"/>
        <dbReference type="ChEBI" id="CHEBI:132255"/>
        <dbReference type="ChEBI" id="CHEBI:132256"/>
    </reaction>
    <physiologicalReaction direction="left-to-right" evidence="2">
        <dbReference type="Rhea" id="RHEA:50297"/>
    </physiologicalReaction>
</comment>
<comment type="cofactor">
    <cofactor evidence="2">
        <name>heme</name>
        <dbReference type="ChEBI" id="CHEBI:30413"/>
    </cofactor>
</comment>
<comment type="subcellular location">
    <subcellularLocation>
        <location evidence="2">Endoplasmic reticulum membrane</location>
        <topology evidence="3">Multi-pass membrane protein</topology>
    </subcellularLocation>
    <subcellularLocation>
        <location evidence="2">Microsome membrane</location>
        <topology evidence="3">Multi-pass membrane protein</topology>
    </subcellularLocation>
    <subcellularLocation>
        <location evidence="2">Mitochondrion inner membrane</location>
        <topology evidence="3">Multi-pass membrane protein</topology>
    </subcellularLocation>
</comment>
<comment type="alternative products">
    <event type="alternative splicing"/>
    <isoform>
        <id>Q9CX98-1</id>
        <name>1</name>
        <sequence type="displayed"/>
    </isoform>
    <isoform>
        <id>Q9CX98-2</id>
        <name>2</name>
        <sequence type="described" ref="VSP_026227 VSP_026228"/>
    </isoform>
    <isoform>
        <id>Q9CX98-3</id>
        <name>3</name>
        <sequence type="described" ref="VSP_026224 VSP_026225 VSP_026226"/>
    </isoform>
</comment>
<comment type="tissue specificity">
    <text evidence="4 5">Widely expressed. Expressed in heart, brain and liver.</text>
</comment>
<comment type="developmental stage">
    <text evidence="4 5">Expressed at all stages after 7 dpc. Expressed in brain structures including cortex, diencephalon, medulla oblongata, spine and cerebellum at 12 dpc. Expression in embryonic nervous system increases during development, as measured at 15 dpc and 18 dpc timepoints.</text>
</comment>
<comment type="similarity">
    <text evidence="7">Belongs to the cytochrome P450 family.</text>
</comment>
<comment type="sequence caution" evidence="7">
    <conflict type="frameshift">
        <sequence resource="EMBL" id="AK142740"/>
    </conflict>
</comment>
<sequence length="530" mass="60578">MSSLGDQRPAAGEQPGARLHVRATGGALLLCLLAVLLGWVWLRRQRACGIPPGPKPRPLVGNFGHLLVPRFLRPQFWLGSGSQTDTVGQHVYLARMARVYGNIFSFFIGHRLVVVLSDFHSVREALVQQAEVFSDRPRMPLISIMTKEKGIVFAHYGPIWKQQRRFSHSTLRHFGLGKLSLEPRIIEEFAYVKEAMQKHGEAPFSPFPIISNAVSNIICSLCFGQRFDYTNKEFKKVLDFMSRGLEICLHSQLFLINICPWFYYLPFGPFKELRQIERDISCFLKNIIREHQESLDASNPQDFIDMYLLHMEEEQGASRRSSFDEDYLFYIIGDLFIAGTDTTTNSLLWCLLYMSLNPDVQKKVHEEIERVIGCDRAPSLTDKAQMPYTEATIMEVQRLSMVVPLAIPHMTSEKTVLQGFTIPKGTVVLINLWSVHRDPAIWEKPDDFCPHRFLDDQGQLLKRETFIPFGIGKRVCMGEQLAKMELFLMFVSLMQTFTFALPEGSEKPVMTGRFGLTLAPHPFNVTISKR</sequence>